<dbReference type="EMBL" id="AE002098">
    <property type="protein sequence ID" value="AAF41051.1"/>
    <property type="molecule type" value="Genomic_DNA"/>
</dbReference>
<dbReference type="PIR" id="F81176">
    <property type="entry name" value="F81176"/>
</dbReference>
<dbReference type="RefSeq" id="NP_273669.1">
    <property type="nucleotide sequence ID" value="NC_003112.2"/>
</dbReference>
<dbReference type="RefSeq" id="WP_002225531.1">
    <property type="nucleotide sequence ID" value="NC_003112.2"/>
</dbReference>
<dbReference type="SMR" id="Q9K0H6"/>
<dbReference type="FunCoup" id="Q9K0H6">
    <property type="interactions" value="236"/>
</dbReference>
<dbReference type="STRING" id="122586.NMB0626"/>
<dbReference type="PaxDb" id="122586-NMB0626"/>
<dbReference type="KEGG" id="nme:NMB0626"/>
<dbReference type="PATRIC" id="fig|122586.8.peg.794"/>
<dbReference type="HOGENOM" id="CLU_002794_2_1_4"/>
<dbReference type="InParanoid" id="Q9K0H6"/>
<dbReference type="OrthoDB" id="9804431at2"/>
<dbReference type="Proteomes" id="UP000000425">
    <property type="component" value="Chromosome"/>
</dbReference>
<dbReference type="GO" id="GO:0005829">
    <property type="term" value="C:cytosol"/>
    <property type="evidence" value="ECO:0000318"/>
    <property type="project" value="GO_Central"/>
</dbReference>
<dbReference type="GO" id="GO:0005525">
    <property type="term" value="F:GTP binding"/>
    <property type="evidence" value="ECO:0007669"/>
    <property type="project" value="UniProtKB-UniRule"/>
</dbReference>
<dbReference type="GO" id="GO:0003924">
    <property type="term" value="F:GTPase activity"/>
    <property type="evidence" value="ECO:0007669"/>
    <property type="project" value="InterPro"/>
</dbReference>
<dbReference type="GO" id="GO:0016150">
    <property type="term" value="F:translation release factor activity, codon nonspecific"/>
    <property type="evidence" value="ECO:0000318"/>
    <property type="project" value="GO_Central"/>
</dbReference>
<dbReference type="GO" id="GO:0016149">
    <property type="term" value="F:translation release factor activity, codon specific"/>
    <property type="evidence" value="ECO:0007669"/>
    <property type="project" value="UniProtKB-UniRule"/>
</dbReference>
<dbReference type="GO" id="GO:0006449">
    <property type="term" value="P:regulation of translational termination"/>
    <property type="evidence" value="ECO:0007669"/>
    <property type="project" value="UniProtKB-UniRule"/>
</dbReference>
<dbReference type="GO" id="GO:0006415">
    <property type="term" value="P:translational termination"/>
    <property type="evidence" value="ECO:0000318"/>
    <property type="project" value="GO_Central"/>
</dbReference>
<dbReference type="CDD" id="cd04169">
    <property type="entry name" value="RF3"/>
    <property type="match status" value="1"/>
</dbReference>
<dbReference type="CDD" id="cd03689">
    <property type="entry name" value="RF3_II"/>
    <property type="match status" value="1"/>
</dbReference>
<dbReference type="CDD" id="cd16259">
    <property type="entry name" value="RF3_III"/>
    <property type="match status" value="1"/>
</dbReference>
<dbReference type="FunFam" id="2.40.30.10:FF:000040">
    <property type="entry name" value="Peptide chain release factor 3"/>
    <property type="match status" value="1"/>
</dbReference>
<dbReference type="FunFam" id="3.30.70.3280:FF:000001">
    <property type="entry name" value="Peptide chain release factor 3"/>
    <property type="match status" value="1"/>
</dbReference>
<dbReference type="FunFam" id="3.40.50.300:FF:000542">
    <property type="entry name" value="Peptide chain release factor 3"/>
    <property type="match status" value="1"/>
</dbReference>
<dbReference type="Gene3D" id="3.40.50.300">
    <property type="entry name" value="P-loop containing nucleotide triphosphate hydrolases"/>
    <property type="match status" value="2"/>
</dbReference>
<dbReference type="Gene3D" id="3.30.70.3280">
    <property type="entry name" value="Peptide chain release factor 3, domain III"/>
    <property type="match status" value="1"/>
</dbReference>
<dbReference type="HAMAP" id="MF_00072">
    <property type="entry name" value="Rel_fac_3"/>
    <property type="match status" value="1"/>
</dbReference>
<dbReference type="InterPro" id="IPR053905">
    <property type="entry name" value="EF-G-like_DII"/>
</dbReference>
<dbReference type="InterPro" id="IPR035647">
    <property type="entry name" value="EFG_III/V"/>
</dbReference>
<dbReference type="InterPro" id="IPR031157">
    <property type="entry name" value="G_TR_CS"/>
</dbReference>
<dbReference type="InterPro" id="IPR027417">
    <property type="entry name" value="P-loop_NTPase"/>
</dbReference>
<dbReference type="InterPro" id="IPR004548">
    <property type="entry name" value="PrfC"/>
</dbReference>
<dbReference type="InterPro" id="IPR032090">
    <property type="entry name" value="RF3_C"/>
</dbReference>
<dbReference type="InterPro" id="IPR038467">
    <property type="entry name" value="RF3_dom_3_sf"/>
</dbReference>
<dbReference type="InterPro" id="IPR041732">
    <property type="entry name" value="RF3_GTP-bd"/>
</dbReference>
<dbReference type="InterPro" id="IPR005225">
    <property type="entry name" value="Small_GTP-bd"/>
</dbReference>
<dbReference type="InterPro" id="IPR000795">
    <property type="entry name" value="T_Tr_GTP-bd_dom"/>
</dbReference>
<dbReference type="InterPro" id="IPR009000">
    <property type="entry name" value="Transl_B-barrel_sf"/>
</dbReference>
<dbReference type="NCBIfam" id="TIGR00503">
    <property type="entry name" value="prfC"/>
    <property type="match status" value="1"/>
</dbReference>
<dbReference type="NCBIfam" id="NF001964">
    <property type="entry name" value="PRK00741.1"/>
    <property type="match status" value="1"/>
</dbReference>
<dbReference type="NCBIfam" id="TIGR00231">
    <property type="entry name" value="small_GTP"/>
    <property type="match status" value="1"/>
</dbReference>
<dbReference type="PANTHER" id="PTHR43556">
    <property type="entry name" value="PEPTIDE CHAIN RELEASE FACTOR RF3"/>
    <property type="match status" value="1"/>
</dbReference>
<dbReference type="PANTHER" id="PTHR43556:SF2">
    <property type="entry name" value="PEPTIDE CHAIN RELEASE FACTOR RF3"/>
    <property type="match status" value="1"/>
</dbReference>
<dbReference type="Pfam" id="PF22042">
    <property type="entry name" value="EF-G_D2"/>
    <property type="match status" value="1"/>
</dbReference>
<dbReference type="Pfam" id="PF00009">
    <property type="entry name" value="GTP_EFTU"/>
    <property type="match status" value="1"/>
</dbReference>
<dbReference type="Pfam" id="PF16658">
    <property type="entry name" value="RF3_C"/>
    <property type="match status" value="1"/>
</dbReference>
<dbReference type="PRINTS" id="PR00315">
    <property type="entry name" value="ELONGATNFCT"/>
</dbReference>
<dbReference type="SUPFAM" id="SSF54980">
    <property type="entry name" value="EF-G C-terminal domain-like"/>
    <property type="match status" value="1"/>
</dbReference>
<dbReference type="SUPFAM" id="SSF52540">
    <property type="entry name" value="P-loop containing nucleoside triphosphate hydrolases"/>
    <property type="match status" value="1"/>
</dbReference>
<dbReference type="SUPFAM" id="SSF50447">
    <property type="entry name" value="Translation proteins"/>
    <property type="match status" value="1"/>
</dbReference>
<dbReference type="PROSITE" id="PS00301">
    <property type="entry name" value="G_TR_1"/>
    <property type="match status" value="1"/>
</dbReference>
<dbReference type="PROSITE" id="PS51722">
    <property type="entry name" value="G_TR_2"/>
    <property type="match status" value="1"/>
</dbReference>
<accession>Q9K0H6</accession>
<feature type="chain" id="PRO_0000210951" description="Peptide chain release factor 3">
    <location>
        <begin position="1"/>
        <end position="531"/>
    </location>
</feature>
<feature type="domain" description="tr-type G">
    <location>
        <begin position="10"/>
        <end position="278"/>
    </location>
</feature>
<feature type="binding site" evidence="1">
    <location>
        <begin position="19"/>
        <end position="26"/>
    </location>
    <ligand>
        <name>GTP</name>
        <dbReference type="ChEBI" id="CHEBI:37565"/>
    </ligand>
</feature>
<feature type="binding site" evidence="1">
    <location>
        <begin position="87"/>
        <end position="91"/>
    </location>
    <ligand>
        <name>GTP</name>
        <dbReference type="ChEBI" id="CHEBI:37565"/>
    </ligand>
</feature>
<feature type="binding site" evidence="1">
    <location>
        <begin position="141"/>
        <end position="144"/>
    </location>
    <ligand>
        <name>GTP</name>
        <dbReference type="ChEBI" id="CHEBI:37565"/>
    </ligand>
</feature>
<organism>
    <name type="scientific">Neisseria meningitidis serogroup B (strain ATCC BAA-335 / MC58)</name>
    <dbReference type="NCBI Taxonomy" id="122586"/>
    <lineage>
        <taxon>Bacteria</taxon>
        <taxon>Pseudomonadati</taxon>
        <taxon>Pseudomonadota</taxon>
        <taxon>Betaproteobacteria</taxon>
        <taxon>Neisseriales</taxon>
        <taxon>Neisseriaceae</taxon>
        <taxon>Neisseria</taxon>
    </lineage>
</organism>
<comment type="function">
    <text evidence="1">Increases the formation of ribosomal termination complexes and stimulates activities of RF-1 and RF-2. It binds guanine nucleotides and has strong preference for UGA stop codons. It may interact directly with the ribosome. The stimulation of RF-1 and RF-2 is significantly reduced by GTP and GDP, but not by GMP.</text>
</comment>
<comment type="subcellular location">
    <subcellularLocation>
        <location evidence="1">Cytoplasm</location>
    </subcellularLocation>
</comment>
<comment type="similarity">
    <text evidence="1">Belongs to the TRAFAC class translation factor GTPase superfamily. Classic translation factor GTPase family. PrfC subfamily.</text>
</comment>
<evidence type="ECO:0000255" key="1">
    <source>
        <dbReference type="HAMAP-Rule" id="MF_00072"/>
    </source>
</evidence>
<keyword id="KW-0963">Cytoplasm</keyword>
<keyword id="KW-0342">GTP-binding</keyword>
<keyword id="KW-0547">Nucleotide-binding</keyword>
<keyword id="KW-0648">Protein biosynthesis</keyword>
<keyword id="KW-1185">Reference proteome</keyword>
<proteinExistence type="inferred from homology"/>
<reference key="1">
    <citation type="journal article" date="2000" name="Science">
        <title>Complete genome sequence of Neisseria meningitidis serogroup B strain MC58.</title>
        <authorList>
            <person name="Tettelin H."/>
            <person name="Saunders N.J."/>
            <person name="Heidelberg J.F."/>
            <person name="Jeffries A.C."/>
            <person name="Nelson K.E."/>
            <person name="Eisen J.A."/>
            <person name="Ketchum K.A."/>
            <person name="Hood D.W."/>
            <person name="Peden J.F."/>
            <person name="Dodson R.J."/>
            <person name="Nelson W.C."/>
            <person name="Gwinn M.L."/>
            <person name="DeBoy R.T."/>
            <person name="Peterson J.D."/>
            <person name="Hickey E.K."/>
            <person name="Haft D.H."/>
            <person name="Salzberg S.L."/>
            <person name="White O."/>
            <person name="Fleischmann R.D."/>
            <person name="Dougherty B.A."/>
            <person name="Mason T.M."/>
            <person name="Ciecko A."/>
            <person name="Parksey D.S."/>
            <person name="Blair E."/>
            <person name="Cittone H."/>
            <person name="Clark E.B."/>
            <person name="Cotton M.D."/>
            <person name="Utterback T.R."/>
            <person name="Khouri H.M."/>
            <person name="Qin H."/>
            <person name="Vamathevan J.J."/>
            <person name="Gill J."/>
            <person name="Scarlato V."/>
            <person name="Masignani V."/>
            <person name="Pizza M."/>
            <person name="Grandi G."/>
            <person name="Sun L."/>
            <person name="Smith H.O."/>
            <person name="Fraser C.M."/>
            <person name="Moxon E.R."/>
            <person name="Rappuoli R."/>
            <person name="Venter J.C."/>
        </authorList>
    </citation>
    <scope>NUCLEOTIDE SEQUENCE [LARGE SCALE GENOMIC DNA]</scope>
    <source>
        <strain>ATCC BAA-335 / MC58</strain>
    </source>
</reference>
<gene>
    <name evidence="1" type="primary">prfC</name>
    <name type="ordered locus">NMB0626</name>
</gene>
<protein>
    <recommendedName>
        <fullName evidence="1">Peptide chain release factor 3</fullName>
        <shortName evidence="1">RF-3</shortName>
    </recommendedName>
</protein>
<sequence>MSQEILDQVRRRRTFAIISHPDAGKTTLTEKLLLFSGAIQSAGTVKGKKTGKFATSDWMEIEKQRGISVASSVMQFDYKDHTVNLLDTPGHQDFSEDTYRVLTAVDSALMVIDAAKGVEAQTIKLLNVCRLRDTPIVTFMNKYDREVRDSLELLDEVENILKIRCAPVTWPIGMGKNFKGVYHILNDEIYLFEAGGERLPHEFDIIKGIDNPELEQRFPLEIQQLRDEIELVQAASNEFNLDEFLAGELTPVFFGSAINNFGIQEILNSLIDWAPAPKPRDATVRMVEPDEPKFSGFIFKIQANMDPKHRDRIAFLRVCSGKFERGMKMKHLRINREIAASSVVTFMSHDRELVEEAYAGDIIGIPNHGNIQIGDSFSEGEQLAFTGIPFFAPELFRSVRIKNPLKIKQLQKGLQQLGEEGAVQVFKPMSGADLILGAVGVLQFEVVTSRLANEYGVEAVFDSASIWSARWVSCDDKKKLAEFEKANAGNLAIDAGGNLAYLAPNRVNLGLTQERWPDIVFHETREHSVKL</sequence>
<name>RF3_NEIMB</name>